<protein>
    <recommendedName>
        <fullName>Putative O-methyltransferase Mmcs_3995</fullName>
        <ecNumber>2.1.1.-</ecNumber>
    </recommendedName>
</protein>
<comment type="similarity">
    <text evidence="2">Belongs to the class I-like SAM-binding methyltransferase superfamily. Cation-dependent O-methyltransferase family.</text>
</comment>
<comment type="sequence caution" evidence="3">
    <conflict type="erroneous initiation">
        <sequence resource="EMBL-CDS" id="ABG10100"/>
    </conflict>
</comment>
<feature type="chain" id="PRO_0000380103" description="Putative O-methyltransferase Mmcs_3995">
    <location>
        <begin position="1"/>
        <end position="220"/>
    </location>
</feature>
<feature type="binding site" evidence="2">
    <location>
        <position position="47"/>
    </location>
    <ligand>
        <name>S-adenosyl-L-methionine</name>
        <dbReference type="ChEBI" id="CHEBI:59789"/>
    </ligand>
</feature>
<feature type="binding site" evidence="2">
    <location>
        <position position="69"/>
    </location>
    <ligand>
        <name>S-adenosyl-L-methionine</name>
        <dbReference type="ChEBI" id="CHEBI:59789"/>
    </ligand>
</feature>
<feature type="binding site" evidence="2">
    <location>
        <begin position="71"/>
        <end position="72"/>
    </location>
    <ligand>
        <name>S-adenosyl-L-methionine</name>
        <dbReference type="ChEBI" id="CHEBI:59789"/>
    </ligand>
</feature>
<feature type="binding site" evidence="2">
    <location>
        <position position="77"/>
    </location>
    <ligand>
        <name>S-adenosyl-L-methionine</name>
        <dbReference type="ChEBI" id="CHEBI:59789"/>
    </ligand>
</feature>
<feature type="binding site" evidence="2">
    <location>
        <position position="95"/>
    </location>
    <ligand>
        <name>S-adenosyl-L-methionine</name>
        <dbReference type="ChEBI" id="CHEBI:59789"/>
    </ligand>
</feature>
<feature type="binding site" evidence="2">
    <location>
        <position position="96"/>
    </location>
    <ligand>
        <name>S-adenosyl-L-methionine</name>
        <dbReference type="ChEBI" id="CHEBI:59789"/>
    </ligand>
</feature>
<feature type="binding site" evidence="1">
    <location>
        <position position="143"/>
    </location>
    <ligand>
        <name>substrate</name>
    </ligand>
</feature>
<feature type="binding site" evidence="2">
    <location>
        <position position="145"/>
    </location>
    <ligand>
        <name>S-adenosyl-L-methionine</name>
        <dbReference type="ChEBI" id="CHEBI:59789"/>
    </ligand>
</feature>
<gene>
    <name type="ordered locus">Mmcs_3995</name>
</gene>
<organism>
    <name type="scientific">Mycobacterium sp. (strain MCS)</name>
    <dbReference type="NCBI Taxonomy" id="164756"/>
    <lineage>
        <taxon>Bacteria</taxon>
        <taxon>Bacillati</taxon>
        <taxon>Actinomycetota</taxon>
        <taxon>Actinomycetes</taxon>
        <taxon>Mycobacteriales</taxon>
        <taxon>Mycobacteriaceae</taxon>
        <taxon>Mycobacterium</taxon>
    </lineage>
</organism>
<accession>Q1B4T4</accession>
<proteinExistence type="inferred from homology"/>
<keyword id="KW-0489">Methyltransferase</keyword>
<keyword id="KW-0949">S-adenosyl-L-methionine</keyword>
<keyword id="KW-0808">Transferase</keyword>
<dbReference type="EC" id="2.1.1.-"/>
<dbReference type="EMBL" id="CP000384">
    <property type="protein sequence ID" value="ABG10100.1"/>
    <property type="status" value="ALT_INIT"/>
    <property type="molecule type" value="Genomic_DNA"/>
</dbReference>
<dbReference type="SMR" id="Q1B4T4"/>
<dbReference type="KEGG" id="mmc:Mmcs_3995"/>
<dbReference type="HOGENOM" id="CLU_067676_2_0_11"/>
<dbReference type="GO" id="GO:0008171">
    <property type="term" value="F:O-methyltransferase activity"/>
    <property type="evidence" value="ECO:0007669"/>
    <property type="project" value="InterPro"/>
</dbReference>
<dbReference type="GO" id="GO:0008757">
    <property type="term" value="F:S-adenosylmethionine-dependent methyltransferase activity"/>
    <property type="evidence" value="ECO:0007669"/>
    <property type="project" value="TreeGrafter"/>
</dbReference>
<dbReference type="GO" id="GO:0032259">
    <property type="term" value="P:methylation"/>
    <property type="evidence" value="ECO:0007669"/>
    <property type="project" value="UniProtKB-KW"/>
</dbReference>
<dbReference type="CDD" id="cd02440">
    <property type="entry name" value="AdoMet_MTases"/>
    <property type="match status" value="1"/>
</dbReference>
<dbReference type="Gene3D" id="3.40.50.150">
    <property type="entry name" value="Vaccinia Virus protein VP39"/>
    <property type="match status" value="1"/>
</dbReference>
<dbReference type="InterPro" id="IPR050362">
    <property type="entry name" value="Cation-dep_OMT"/>
</dbReference>
<dbReference type="InterPro" id="IPR029063">
    <property type="entry name" value="SAM-dependent_MTases_sf"/>
</dbReference>
<dbReference type="InterPro" id="IPR002935">
    <property type="entry name" value="SAM_O-MeTrfase"/>
</dbReference>
<dbReference type="PANTHER" id="PTHR10509:SF85">
    <property type="entry name" value="O-METHYLTRANSFERASE RV1220C-RELATED"/>
    <property type="match status" value="1"/>
</dbReference>
<dbReference type="PANTHER" id="PTHR10509">
    <property type="entry name" value="O-METHYLTRANSFERASE-RELATED"/>
    <property type="match status" value="1"/>
</dbReference>
<dbReference type="Pfam" id="PF01596">
    <property type="entry name" value="Methyltransf_3"/>
    <property type="match status" value="1"/>
</dbReference>
<dbReference type="SUPFAM" id="SSF53335">
    <property type="entry name" value="S-adenosyl-L-methionine-dependent methyltransferases"/>
    <property type="match status" value="1"/>
</dbReference>
<dbReference type="PROSITE" id="PS51682">
    <property type="entry name" value="SAM_OMT_I"/>
    <property type="match status" value="1"/>
</dbReference>
<sequence length="220" mass="22700">MASTDDPAGQRPSRAEAIVAHAEQSISEDAIVAAARERAVDMGAGAVTPAVGALLSVLARLTEAKAVVEVGTGAGVSGLWLLSGMREDGVLTTIDVEPEHQRIAKQAFTEAGIGPGRTRLISGRAQDVLTRLADESYDLVFIDADPVDQPQFVVEGVRLLRSGGAIVVHRAALGGRAGDAGANDAEVSAVREAARLIAEDERLTPVLIPLGDGLLAAARD</sequence>
<name>Y3995_MYCSS</name>
<reference key="1">
    <citation type="submission" date="2006-06" db="EMBL/GenBank/DDBJ databases">
        <title>Complete sequence of chromosome of Mycobacterium sp. MCS.</title>
        <authorList>
            <consortium name="US DOE Joint Genome Institute"/>
            <person name="Copeland A."/>
            <person name="Lucas S."/>
            <person name="Lapidus A."/>
            <person name="Barry K."/>
            <person name="Detter J.C."/>
            <person name="Glavina del Rio T."/>
            <person name="Hammon N."/>
            <person name="Israni S."/>
            <person name="Dalin E."/>
            <person name="Tice H."/>
            <person name="Pitluck S."/>
            <person name="Martinez M."/>
            <person name="Schmutz J."/>
            <person name="Larimer F."/>
            <person name="Land M."/>
            <person name="Hauser L."/>
            <person name="Kyrpides N."/>
            <person name="Kim E."/>
            <person name="Miller C.D."/>
            <person name="Hughes J.E."/>
            <person name="Anderson A.J."/>
            <person name="Sims R.C."/>
            <person name="Richardson P."/>
        </authorList>
    </citation>
    <scope>NUCLEOTIDE SEQUENCE [LARGE SCALE GENOMIC DNA]</scope>
    <source>
        <strain>MCS</strain>
    </source>
</reference>
<evidence type="ECO:0000250" key="1"/>
<evidence type="ECO:0000255" key="2">
    <source>
        <dbReference type="PROSITE-ProRule" id="PRU01019"/>
    </source>
</evidence>
<evidence type="ECO:0000305" key="3"/>